<feature type="chain" id="PRO_1000133561" description="NAD kinase">
    <location>
        <begin position="1"/>
        <end position="276"/>
    </location>
</feature>
<feature type="active site" description="Proton acceptor" evidence="1">
    <location>
        <position position="66"/>
    </location>
</feature>
<feature type="binding site" evidence="1">
    <location>
        <begin position="66"/>
        <end position="67"/>
    </location>
    <ligand>
        <name>NAD(+)</name>
        <dbReference type="ChEBI" id="CHEBI:57540"/>
    </ligand>
</feature>
<feature type="binding site" evidence="1">
    <location>
        <begin position="139"/>
        <end position="140"/>
    </location>
    <ligand>
        <name>NAD(+)</name>
        <dbReference type="ChEBI" id="CHEBI:57540"/>
    </ligand>
</feature>
<feature type="binding site" evidence="1">
    <location>
        <position position="168"/>
    </location>
    <ligand>
        <name>NAD(+)</name>
        <dbReference type="ChEBI" id="CHEBI:57540"/>
    </ligand>
</feature>
<feature type="binding site" evidence="1">
    <location>
        <begin position="179"/>
        <end position="184"/>
    </location>
    <ligand>
        <name>NAD(+)</name>
        <dbReference type="ChEBI" id="CHEBI:57540"/>
    </ligand>
</feature>
<feature type="binding site" evidence="1">
    <location>
        <position position="234"/>
    </location>
    <ligand>
        <name>NAD(+)</name>
        <dbReference type="ChEBI" id="CHEBI:57540"/>
    </ligand>
</feature>
<sequence>MKKCINIEKIQKIGLFCRLNTNLNKQIDFLRAIFLQKNIELVLLEQEKINLKDLQELDFLISLGGDGTLLSLCRQAYQAKKPILGINAGNLGFLTALSFNEAESFFKDFFKNDFKIEKAKMLQITLYKKNKIIKKFAFNDAVFSRDNALMANVEVFFENKLFNAYYGDGLIIASSSGSTAYNISAGGPIVHPWSEIFVLTPVCSHSLTQRPIVLPYGFELELKVEHCLLYLDGQEVVDPKEYDKILIGLSKKELSFIHKKNRDYFQVLKEKLNWGK</sequence>
<comment type="function">
    <text evidence="1">Involved in the regulation of the intracellular balance of NAD and NADP, and is a key enzyme in the biosynthesis of NADP. Catalyzes specifically the phosphorylation on 2'-hydroxyl of the adenosine moiety of NAD to yield NADP.</text>
</comment>
<comment type="catalytic activity">
    <reaction evidence="1">
        <text>NAD(+) + ATP = ADP + NADP(+) + H(+)</text>
        <dbReference type="Rhea" id="RHEA:18629"/>
        <dbReference type="ChEBI" id="CHEBI:15378"/>
        <dbReference type="ChEBI" id="CHEBI:30616"/>
        <dbReference type="ChEBI" id="CHEBI:57540"/>
        <dbReference type="ChEBI" id="CHEBI:58349"/>
        <dbReference type="ChEBI" id="CHEBI:456216"/>
        <dbReference type="EC" id="2.7.1.23"/>
    </reaction>
</comment>
<comment type="cofactor">
    <cofactor evidence="1">
        <name>a divalent metal cation</name>
        <dbReference type="ChEBI" id="CHEBI:60240"/>
    </cofactor>
</comment>
<comment type="subcellular location">
    <subcellularLocation>
        <location evidence="1">Cytoplasm</location>
    </subcellularLocation>
</comment>
<comment type="similarity">
    <text evidence="1">Belongs to the NAD kinase family.</text>
</comment>
<keyword id="KW-0067">ATP-binding</keyword>
<keyword id="KW-0963">Cytoplasm</keyword>
<keyword id="KW-0418">Kinase</keyword>
<keyword id="KW-0520">NAD</keyword>
<keyword id="KW-0521">NADP</keyword>
<keyword id="KW-0547">Nucleotide-binding</keyword>
<keyword id="KW-1185">Reference proteome</keyword>
<keyword id="KW-0808">Transferase</keyword>
<protein>
    <recommendedName>
        <fullName evidence="1">NAD kinase</fullName>
        <ecNumber evidence="1">2.7.1.23</ecNumber>
    </recommendedName>
    <alternativeName>
        <fullName evidence="1">ATP-dependent NAD kinase</fullName>
    </alternativeName>
</protein>
<name>NADK_CAMLR</name>
<gene>
    <name evidence="1" type="primary">nadK</name>
    <name type="ordered locus">Cla_0650</name>
</gene>
<proteinExistence type="inferred from homology"/>
<accession>B9KFZ4</accession>
<dbReference type="EC" id="2.7.1.23" evidence="1"/>
<dbReference type="EMBL" id="CP000932">
    <property type="protein sequence ID" value="ACM63979.1"/>
    <property type="molecule type" value="Genomic_DNA"/>
</dbReference>
<dbReference type="RefSeq" id="WP_012661362.1">
    <property type="nucleotide sequence ID" value="NC_012039.1"/>
</dbReference>
<dbReference type="SMR" id="B9KFZ4"/>
<dbReference type="STRING" id="306263.Cla_0650"/>
<dbReference type="KEGG" id="cla:CLA_0650"/>
<dbReference type="PATRIC" id="fig|306263.5.peg.630"/>
<dbReference type="eggNOG" id="COG0061">
    <property type="taxonomic scope" value="Bacteria"/>
</dbReference>
<dbReference type="HOGENOM" id="CLU_008831_0_3_7"/>
<dbReference type="Proteomes" id="UP000007727">
    <property type="component" value="Chromosome"/>
</dbReference>
<dbReference type="GO" id="GO:0005737">
    <property type="term" value="C:cytoplasm"/>
    <property type="evidence" value="ECO:0007669"/>
    <property type="project" value="UniProtKB-SubCell"/>
</dbReference>
<dbReference type="GO" id="GO:0005524">
    <property type="term" value="F:ATP binding"/>
    <property type="evidence" value="ECO:0007669"/>
    <property type="project" value="UniProtKB-KW"/>
</dbReference>
<dbReference type="GO" id="GO:0046872">
    <property type="term" value="F:metal ion binding"/>
    <property type="evidence" value="ECO:0007669"/>
    <property type="project" value="UniProtKB-UniRule"/>
</dbReference>
<dbReference type="GO" id="GO:0051287">
    <property type="term" value="F:NAD binding"/>
    <property type="evidence" value="ECO:0007669"/>
    <property type="project" value="UniProtKB-ARBA"/>
</dbReference>
<dbReference type="GO" id="GO:0003951">
    <property type="term" value="F:NAD+ kinase activity"/>
    <property type="evidence" value="ECO:0007669"/>
    <property type="project" value="UniProtKB-UniRule"/>
</dbReference>
<dbReference type="GO" id="GO:0019674">
    <property type="term" value="P:NAD metabolic process"/>
    <property type="evidence" value="ECO:0007669"/>
    <property type="project" value="InterPro"/>
</dbReference>
<dbReference type="GO" id="GO:0006741">
    <property type="term" value="P:NADP biosynthetic process"/>
    <property type="evidence" value="ECO:0007669"/>
    <property type="project" value="UniProtKB-UniRule"/>
</dbReference>
<dbReference type="Gene3D" id="3.40.50.10330">
    <property type="entry name" value="Probable inorganic polyphosphate/atp-NAD kinase, domain 1"/>
    <property type="match status" value="1"/>
</dbReference>
<dbReference type="Gene3D" id="2.60.200.30">
    <property type="entry name" value="Probable inorganic polyphosphate/atp-NAD kinase, domain 2"/>
    <property type="match status" value="1"/>
</dbReference>
<dbReference type="HAMAP" id="MF_00361">
    <property type="entry name" value="NAD_kinase"/>
    <property type="match status" value="1"/>
</dbReference>
<dbReference type="InterPro" id="IPR017438">
    <property type="entry name" value="ATP-NAD_kinase_N"/>
</dbReference>
<dbReference type="InterPro" id="IPR017437">
    <property type="entry name" value="ATP-NAD_kinase_PpnK-typ_C"/>
</dbReference>
<dbReference type="InterPro" id="IPR016064">
    <property type="entry name" value="NAD/diacylglycerol_kinase_sf"/>
</dbReference>
<dbReference type="InterPro" id="IPR002504">
    <property type="entry name" value="NADK"/>
</dbReference>
<dbReference type="PANTHER" id="PTHR20275">
    <property type="entry name" value="NAD KINASE"/>
    <property type="match status" value="1"/>
</dbReference>
<dbReference type="PANTHER" id="PTHR20275:SF0">
    <property type="entry name" value="NAD KINASE"/>
    <property type="match status" value="1"/>
</dbReference>
<dbReference type="Pfam" id="PF01513">
    <property type="entry name" value="NAD_kinase"/>
    <property type="match status" value="1"/>
</dbReference>
<dbReference type="Pfam" id="PF20143">
    <property type="entry name" value="NAD_kinase_C"/>
    <property type="match status" value="1"/>
</dbReference>
<dbReference type="SUPFAM" id="SSF111331">
    <property type="entry name" value="NAD kinase/diacylglycerol kinase-like"/>
    <property type="match status" value="1"/>
</dbReference>
<evidence type="ECO:0000255" key="1">
    <source>
        <dbReference type="HAMAP-Rule" id="MF_00361"/>
    </source>
</evidence>
<reference key="1">
    <citation type="journal article" date="2008" name="Foodborne Pathog. Dis.">
        <title>The complete genome sequence and analysis of the human pathogen Campylobacter lari.</title>
        <authorList>
            <person name="Miller W.G."/>
            <person name="Wang G."/>
            <person name="Binnewies T.T."/>
            <person name="Parker C.T."/>
        </authorList>
    </citation>
    <scope>NUCLEOTIDE SEQUENCE [LARGE SCALE GENOMIC DNA]</scope>
    <source>
        <strain>RM2100 / D67 / ATCC BAA-1060</strain>
    </source>
</reference>
<organism>
    <name type="scientific">Campylobacter lari (strain RM2100 / D67 / ATCC BAA-1060)</name>
    <dbReference type="NCBI Taxonomy" id="306263"/>
    <lineage>
        <taxon>Bacteria</taxon>
        <taxon>Pseudomonadati</taxon>
        <taxon>Campylobacterota</taxon>
        <taxon>Epsilonproteobacteria</taxon>
        <taxon>Campylobacterales</taxon>
        <taxon>Campylobacteraceae</taxon>
        <taxon>Campylobacter</taxon>
    </lineage>
</organism>